<feature type="chain" id="PRO_1000022092" description="Isoleucine--tRNA ligase">
    <location>
        <begin position="1"/>
        <end position="930"/>
    </location>
</feature>
<feature type="short sequence motif" description="'HIGH' region">
    <location>
        <begin position="57"/>
        <end position="67"/>
    </location>
</feature>
<feature type="short sequence motif" description="'KMSKS' region">
    <location>
        <begin position="596"/>
        <end position="600"/>
    </location>
</feature>
<feature type="binding site" evidence="1">
    <location>
        <position position="555"/>
    </location>
    <ligand>
        <name>L-isoleucyl-5'-AMP</name>
        <dbReference type="ChEBI" id="CHEBI:178002"/>
    </ligand>
</feature>
<feature type="binding site" evidence="1">
    <location>
        <position position="599"/>
    </location>
    <ligand>
        <name>ATP</name>
        <dbReference type="ChEBI" id="CHEBI:30616"/>
    </ligand>
</feature>
<feature type="binding site" evidence="1">
    <location>
        <position position="896"/>
    </location>
    <ligand>
        <name>Zn(2+)</name>
        <dbReference type="ChEBI" id="CHEBI:29105"/>
    </ligand>
</feature>
<feature type="binding site" evidence="1">
    <location>
        <position position="899"/>
    </location>
    <ligand>
        <name>Zn(2+)</name>
        <dbReference type="ChEBI" id="CHEBI:29105"/>
    </ligand>
</feature>
<feature type="binding site" evidence="1">
    <location>
        <position position="916"/>
    </location>
    <ligand>
        <name>Zn(2+)</name>
        <dbReference type="ChEBI" id="CHEBI:29105"/>
    </ligand>
</feature>
<feature type="binding site" evidence="1">
    <location>
        <position position="919"/>
    </location>
    <ligand>
        <name>Zn(2+)</name>
        <dbReference type="ChEBI" id="CHEBI:29105"/>
    </ligand>
</feature>
<gene>
    <name evidence="1" type="primary">ileS</name>
    <name type="ordered locus">Moth_0863</name>
</gene>
<organism>
    <name type="scientific">Moorella thermoacetica (strain ATCC 39073 / JCM 9320)</name>
    <dbReference type="NCBI Taxonomy" id="264732"/>
    <lineage>
        <taxon>Bacteria</taxon>
        <taxon>Bacillati</taxon>
        <taxon>Bacillota</taxon>
        <taxon>Clostridia</taxon>
        <taxon>Moorellales</taxon>
        <taxon>Moorellaceae</taxon>
        <taxon>Moorella</taxon>
    </lineage>
</organism>
<protein>
    <recommendedName>
        <fullName evidence="1">Isoleucine--tRNA ligase</fullName>
        <ecNumber evidence="1">6.1.1.5</ecNumber>
    </recommendedName>
    <alternativeName>
        <fullName evidence="1">Isoleucyl-tRNA synthetase</fullName>
        <shortName evidence="1">IleRS</shortName>
    </alternativeName>
</protein>
<comment type="function">
    <text evidence="1">Catalyzes the attachment of isoleucine to tRNA(Ile). As IleRS can inadvertently accommodate and process structurally similar amino acids such as valine, to avoid such errors it has two additional distinct tRNA(Ile)-dependent editing activities. One activity is designated as 'pretransfer' editing and involves the hydrolysis of activated Val-AMP. The other activity is designated 'posttransfer' editing and involves deacylation of mischarged Val-tRNA(Ile).</text>
</comment>
<comment type="catalytic activity">
    <reaction evidence="1">
        <text>tRNA(Ile) + L-isoleucine + ATP = L-isoleucyl-tRNA(Ile) + AMP + diphosphate</text>
        <dbReference type="Rhea" id="RHEA:11060"/>
        <dbReference type="Rhea" id="RHEA-COMP:9666"/>
        <dbReference type="Rhea" id="RHEA-COMP:9695"/>
        <dbReference type="ChEBI" id="CHEBI:30616"/>
        <dbReference type="ChEBI" id="CHEBI:33019"/>
        <dbReference type="ChEBI" id="CHEBI:58045"/>
        <dbReference type="ChEBI" id="CHEBI:78442"/>
        <dbReference type="ChEBI" id="CHEBI:78528"/>
        <dbReference type="ChEBI" id="CHEBI:456215"/>
        <dbReference type="EC" id="6.1.1.5"/>
    </reaction>
</comment>
<comment type="cofactor">
    <cofactor evidence="1">
        <name>Zn(2+)</name>
        <dbReference type="ChEBI" id="CHEBI:29105"/>
    </cofactor>
    <text evidence="1">Binds 1 zinc ion per subunit.</text>
</comment>
<comment type="subunit">
    <text evidence="1">Monomer.</text>
</comment>
<comment type="subcellular location">
    <subcellularLocation>
        <location evidence="1">Cytoplasm</location>
    </subcellularLocation>
</comment>
<comment type="domain">
    <text evidence="1">IleRS has two distinct active sites: one for aminoacylation and one for editing. The misactivated valine is translocated from the active site to the editing site, which sterically excludes the correctly activated isoleucine. The single editing site contains two valyl binding pockets, one specific for each substrate (Val-AMP or Val-tRNA(Ile)).</text>
</comment>
<comment type="similarity">
    <text evidence="1">Belongs to the class-I aminoacyl-tRNA synthetase family. IleS type 1 subfamily.</text>
</comment>
<name>SYI_MOOTA</name>
<reference key="1">
    <citation type="journal article" date="2008" name="Environ. Microbiol.">
        <title>The complete genome sequence of Moorella thermoacetica (f. Clostridium thermoaceticum).</title>
        <authorList>
            <person name="Pierce E."/>
            <person name="Xie G."/>
            <person name="Barabote R.D."/>
            <person name="Saunders E."/>
            <person name="Han C.S."/>
            <person name="Detter J.C."/>
            <person name="Richardson P."/>
            <person name="Brettin T.S."/>
            <person name="Das A."/>
            <person name="Ljungdahl L.G."/>
            <person name="Ragsdale S.W."/>
        </authorList>
    </citation>
    <scope>NUCLEOTIDE SEQUENCE [LARGE SCALE GENOMIC DNA]</scope>
    <source>
        <strain>ATCC 39073 / JCM 9320</strain>
    </source>
</reference>
<sequence length="930" mass="106238">MDYSKTLNLPRTDFPMRANLPQREPEILKFWEENDIYGKVQEANRGKPKFILHDGPPYANGHLHLGHTLNKILKDIIIKYHSMNGYDAPYVPGWDTHGLPIEQQAIKNLGLNRHAVDVVEFRNRCRDYALKYVNIQREEFKRLGVRGDWEHPYLTLEPEYEAIQIGIFGEMAKKGYIYKGLKPVYWCTDCETALAEAEVEYGEERSPSIYVKFPVADARGLFEPRGSSIVIWTTTPWTLPANVAIALHPEFKYVLIQVGEERLLMAAELVRPVLELLGVKDYQVVATFTGSELEGVVCRNPLMDRDSVVILGEHVTLEQGTGCVHTAPGHGLEDYEVGMRYHLPVLSPLDDRGRFTEEGGQFAGLFIDEANKAVVKELEARGALLHFGFIKHQYPHCWRCKHPIIFRATEQWFASIEGFRQEALEAIKKVKWIPSWGEDRIYNMVADRSDWCISRQRTWGVPIPIFYCANCGREIINDATISHLQELFRKHGSNVWFAREAGELVPPGLKCPECGSKEFRKETDIMDVWFDSGSSHAAVLATRPELAWPADLYLEGSDQHRGWFNSSLSTAVATRGRAPYRQVLTHGFLVDEEGRKMSKSLGNGIDPADVIRQRGADVLRLWVASADYRRDVAASENIMRQITEAYRKIRNTCRFLLANLADFDPGKDQVPREEMLELDRWAMNRLQRLIARVTMAYDDYEFHVVYHTIHNFCAVDLSAVYLDIIKDRLYTWPAASKGRRSAQTVLYETINVLVRLLTPILAFTTEEIWRYLPGEDDRPISVQLAGWPQVKTEFLDDELEEKWKRILQVRDVVARALERARQEQDLGNSLNAAVHLYPDADMYQFLKPLGDELATIMIVSRVDLHQPGEEAPAGSLEAPELPGLRVYVTGAPGQKCERCWMVSETVGQDTDHPTLCRRCATVVKEMYMNG</sequence>
<keyword id="KW-0030">Aminoacyl-tRNA synthetase</keyword>
<keyword id="KW-0067">ATP-binding</keyword>
<keyword id="KW-0963">Cytoplasm</keyword>
<keyword id="KW-0436">Ligase</keyword>
<keyword id="KW-0479">Metal-binding</keyword>
<keyword id="KW-0547">Nucleotide-binding</keyword>
<keyword id="KW-0648">Protein biosynthesis</keyword>
<keyword id="KW-0862">Zinc</keyword>
<evidence type="ECO:0000255" key="1">
    <source>
        <dbReference type="HAMAP-Rule" id="MF_02002"/>
    </source>
</evidence>
<accession>Q2RK59</accession>
<proteinExistence type="inferred from homology"/>
<dbReference type="EC" id="6.1.1.5" evidence="1"/>
<dbReference type="EMBL" id="CP000232">
    <property type="protein sequence ID" value="ABC19180.1"/>
    <property type="molecule type" value="Genomic_DNA"/>
</dbReference>
<dbReference type="RefSeq" id="YP_429723.1">
    <property type="nucleotide sequence ID" value="NC_007644.1"/>
</dbReference>
<dbReference type="SMR" id="Q2RK59"/>
<dbReference type="STRING" id="264732.Moth_0863"/>
<dbReference type="EnsemblBacteria" id="ABC19180">
    <property type="protein sequence ID" value="ABC19180"/>
    <property type="gene ID" value="Moth_0863"/>
</dbReference>
<dbReference type="KEGG" id="mta:Moth_0863"/>
<dbReference type="PATRIC" id="fig|264732.11.peg.926"/>
<dbReference type="eggNOG" id="COG0060">
    <property type="taxonomic scope" value="Bacteria"/>
</dbReference>
<dbReference type="HOGENOM" id="CLU_001493_7_0_9"/>
<dbReference type="OrthoDB" id="9810365at2"/>
<dbReference type="GO" id="GO:0005829">
    <property type="term" value="C:cytosol"/>
    <property type="evidence" value="ECO:0007669"/>
    <property type="project" value="TreeGrafter"/>
</dbReference>
<dbReference type="GO" id="GO:0002161">
    <property type="term" value="F:aminoacyl-tRNA deacylase activity"/>
    <property type="evidence" value="ECO:0007669"/>
    <property type="project" value="InterPro"/>
</dbReference>
<dbReference type="GO" id="GO:0005524">
    <property type="term" value="F:ATP binding"/>
    <property type="evidence" value="ECO:0007669"/>
    <property type="project" value="UniProtKB-UniRule"/>
</dbReference>
<dbReference type="GO" id="GO:0004822">
    <property type="term" value="F:isoleucine-tRNA ligase activity"/>
    <property type="evidence" value="ECO:0007669"/>
    <property type="project" value="UniProtKB-UniRule"/>
</dbReference>
<dbReference type="GO" id="GO:0000049">
    <property type="term" value="F:tRNA binding"/>
    <property type="evidence" value="ECO:0007669"/>
    <property type="project" value="InterPro"/>
</dbReference>
<dbReference type="GO" id="GO:0008270">
    <property type="term" value="F:zinc ion binding"/>
    <property type="evidence" value="ECO:0007669"/>
    <property type="project" value="UniProtKB-UniRule"/>
</dbReference>
<dbReference type="GO" id="GO:0006428">
    <property type="term" value="P:isoleucyl-tRNA aminoacylation"/>
    <property type="evidence" value="ECO:0007669"/>
    <property type="project" value="UniProtKB-UniRule"/>
</dbReference>
<dbReference type="CDD" id="cd07960">
    <property type="entry name" value="Anticodon_Ia_Ile_BEm"/>
    <property type="match status" value="1"/>
</dbReference>
<dbReference type="CDD" id="cd00818">
    <property type="entry name" value="IleRS_core"/>
    <property type="match status" value="1"/>
</dbReference>
<dbReference type="FunFam" id="1.10.730.20:FF:000001">
    <property type="entry name" value="Isoleucine--tRNA ligase"/>
    <property type="match status" value="1"/>
</dbReference>
<dbReference type="FunFam" id="3.40.50.620:FF:000152">
    <property type="entry name" value="Isoleucine--tRNA ligase"/>
    <property type="match status" value="1"/>
</dbReference>
<dbReference type="Gene3D" id="1.10.730.20">
    <property type="match status" value="1"/>
</dbReference>
<dbReference type="Gene3D" id="3.40.50.620">
    <property type="entry name" value="HUPs"/>
    <property type="match status" value="2"/>
</dbReference>
<dbReference type="Gene3D" id="1.10.10.830">
    <property type="entry name" value="Ile-tRNA synthetase CP2 domain-like"/>
    <property type="match status" value="1"/>
</dbReference>
<dbReference type="Gene3D" id="3.90.740.10">
    <property type="entry name" value="Valyl/Leucyl/Isoleucyl-tRNA synthetase, editing domain"/>
    <property type="match status" value="1"/>
</dbReference>
<dbReference type="HAMAP" id="MF_02002">
    <property type="entry name" value="Ile_tRNA_synth_type1"/>
    <property type="match status" value="1"/>
</dbReference>
<dbReference type="InterPro" id="IPR001412">
    <property type="entry name" value="aa-tRNA-synth_I_CS"/>
</dbReference>
<dbReference type="InterPro" id="IPR002300">
    <property type="entry name" value="aa-tRNA-synth_Ia"/>
</dbReference>
<dbReference type="InterPro" id="IPR033708">
    <property type="entry name" value="Anticodon_Ile_BEm"/>
</dbReference>
<dbReference type="InterPro" id="IPR002301">
    <property type="entry name" value="Ile-tRNA-ligase"/>
</dbReference>
<dbReference type="InterPro" id="IPR023585">
    <property type="entry name" value="Ile-tRNA-ligase_type1"/>
</dbReference>
<dbReference type="InterPro" id="IPR050081">
    <property type="entry name" value="Ile-tRNA_ligase"/>
</dbReference>
<dbReference type="InterPro" id="IPR013155">
    <property type="entry name" value="M/V/L/I-tRNA-synth_anticd-bd"/>
</dbReference>
<dbReference type="InterPro" id="IPR014729">
    <property type="entry name" value="Rossmann-like_a/b/a_fold"/>
</dbReference>
<dbReference type="InterPro" id="IPR009080">
    <property type="entry name" value="tRNAsynth_Ia_anticodon-bd"/>
</dbReference>
<dbReference type="InterPro" id="IPR009008">
    <property type="entry name" value="Val/Leu/Ile-tRNA-synth_edit"/>
</dbReference>
<dbReference type="InterPro" id="IPR010663">
    <property type="entry name" value="Znf_FPG/IleRS"/>
</dbReference>
<dbReference type="NCBIfam" id="TIGR00392">
    <property type="entry name" value="ileS"/>
    <property type="match status" value="1"/>
</dbReference>
<dbReference type="PANTHER" id="PTHR42765:SF1">
    <property type="entry name" value="ISOLEUCINE--TRNA LIGASE, MITOCHONDRIAL"/>
    <property type="match status" value="1"/>
</dbReference>
<dbReference type="PANTHER" id="PTHR42765">
    <property type="entry name" value="SOLEUCYL-TRNA SYNTHETASE"/>
    <property type="match status" value="1"/>
</dbReference>
<dbReference type="Pfam" id="PF08264">
    <property type="entry name" value="Anticodon_1"/>
    <property type="match status" value="1"/>
</dbReference>
<dbReference type="Pfam" id="PF00133">
    <property type="entry name" value="tRNA-synt_1"/>
    <property type="match status" value="1"/>
</dbReference>
<dbReference type="Pfam" id="PF06827">
    <property type="entry name" value="zf-FPG_IleRS"/>
    <property type="match status" value="1"/>
</dbReference>
<dbReference type="PRINTS" id="PR00984">
    <property type="entry name" value="TRNASYNTHILE"/>
</dbReference>
<dbReference type="SUPFAM" id="SSF47323">
    <property type="entry name" value="Anticodon-binding domain of a subclass of class I aminoacyl-tRNA synthetases"/>
    <property type="match status" value="1"/>
</dbReference>
<dbReference type="SUPFAM" id="SSF52374">
    <property type="entry name" value="Nucleotidylyl transferase"/>
    <property type="match status" value="1"/>
</dbReference>
<dbReference type="SUPFAM" id="SSF50677">
    <property type="entry name" value="ValRS/IleRS/LeuRS editing domain"/>
    <property type="match status" value="1"/>
</dbReference>
<dbReference type="PROSITE" id="PS00178">
    <property type="entry name" value="AA_TRNA_LIGASE_I"/>
    <property type="match status" value="1"/>
</dbReference>